<feature type="chain" id="PRO_0000293861" description="Small ribosomal subunit protein uS3">
    <location>
        <begin position="1"/>
        <end position="265"/>
    </location>
</feature>
<feature type="domain" description="KH type-2" evidence="1">
    <location>
        <begin position="39"/>
        <end position="107"/>
    </location>
</feature>
<feature type="region of interest" description="Disordered" evidence="2">
    <location>
        <begin position="211"/>
        <end position="265"/>
    </location>
</feature>
<feature type="compositionally biased region" description="Basic and acidic residues" evidence="2">
    <location>
        <begin position="221"/>
        <end position="239"/>
    </location>
</feature>
<feature type="compositionally biased region" description="Gly residues" evidence="2">
    <location>
        <begin position="240"/>
        <end position="251"/>
    </location>
</feature>
<dbReference type="EMBL" id="AM260479">
    <property type="protein sequence ID" value="CAJ94546.1"/>
    <property type="molecule type" value="Genomic_DNA"/>
</dbReference>
<dbReference type="RefSeq" id="WP_010812392.1">
    <property type="nucleotide sequence ID" value="NZ_CP039287.1"/>
</dbReference>
<dbReference type="SMR" id="Q0K625"/>
<dbReference type="STRING" id="381666.H16_A3478"/>
<dbReference type="GeneID" id="29761076"/>
<dbReference type="KEGG" id="reh:H16_A3478"/>
<dbReference type="eggNOG" id="COG0092">
    <property type="taxonomic scope" value="Bacteria"/>
</dbReference>
<dbReference type="HOGENOM" id="CLU_058591_0_2_4"/>
<dbReference type="OrthoDB" id="9806396at2"/>
<dbReference type="Proteomes" id="UP000008210">
    <property type="component" value="Chromosome 1"/>
</dbReference>
<dbReference type="GO" id="GO:0022627">
    <property type="term" value="C:cytosolic small ribosomal subunit"/>
    <property type="evidence" value="ECO:0007669"/>
    <property type="project" value="TreeGrafter"/>
</dbReference>
<dbReference type="GO" id="GO:0003729">
    <property type="term" value="F:mRNA binding"/>
    <property type="evidence" value="ECO:0007669"/>
    <property type="project" value="UniProtKB-UniRule"/>
</dbReference>
<dbReference type="GO" id="GO:0019843">
    <property type="term" value="F:rRNA binding"/>
    <property type="evidence" value="ECO:0007669"/>
    <property type="project" value="UniProtKB-UniRule"/>
</dbReference>
<dbReference type="GO" id="GO:0003735">
    <property type="term" value="F:structural constituent of ribosome"/>
    <property type="evidence" value="ECO:0007669"/>
    <property type="project" value="InterPro"/>
</dbReference>
<dbReference type="GO" id="GO:0006412">
    <property type="term" value="P:translation"/>
    <property type="evidence" value="ECO:0007669"/>
    <property type="project" value="UniProtKB-UniRule"/>
</dbReference>
<dbReference type="CDD" id="cd02412">
    <property type="entry name" value="KH-II_30S_S3"/>
    <property type="match status" value="1"/>
</dbReference>
<dbReference type="FunFam" id="3.30.1140.32:FF:000006">
    <property type="entry name" value="30S ribosomal protein S3"/>
    <property type="match status" value="1"/>
</dbReference>
<dbReference type="FunFam" id="3.30.300.20:FF:000001">
    <property type="entry name" value="30S ribosomal protein S3"/>
    <property type="match status" value="1"/>
</dbReference>
<dbReference type="Gene3D" id="3.30.300.20">
    <property type="match status" value="1"/>
</dbReference>
<dbReference type="Gene3D" id="3.30.1140.32">
    <property type="entry name" value="Ribosomal protein S3, C-terminal domain"/>
    <property type="match status" value="1"/>
</dbReference>
<dbReference type="HAMAP" id="MF_01309_B">
    <property type="entry name" value="Ribosomal_uS3_B"/>
    <property type="match status" value="1"/>
</dbReference>
<dbReference type="InterPro" id="IPR004087">
    <property type="entry name" value="KH_dom"/>
</dbReference>
<dbReference type="InterPro" id="IPR015946">
    <property type="entry name" value="KH_dom-like_a/b"/>
</dbReference>
<dbReference type="InterPro" id="IPR004044">
    <property type="entry name" value="KH_dom_type_2"/>
</dbReference>
<dbReference type="InterPro" id="IPR009019">
    <property type="entry name" value="KH_sf_prok-type"/>
</dbReference>
<dbReference type="InterPro" id="IPR036419">
    <property type="entry name" value="Ribosomal_S3_C_sf"/>
</dbReference>
<dbReference type="InterPro" id="IPR005704">
    <property type="entry name" value="Ribosomal_uS3_bac-typ"/>
</dbReference>
<dbReference type="InterPro" id="IPR001351">
    <property type="entry name" value="Ribosomal_uS3_C"/>
</dbReference>
<dbReference type="InterPro" id="IPR018280">
    <property type="entry name" value="Ribosomal_uS3_CS"/>
</dbReference>
<dbReference type="NCBIfam" id="TIGR01009">
    <property type="entry name" value="rpsC_bact"/>
    <property type="match status" value="1"/>
</dbReference>
<dbReference type="PANTHER" id="PTHR11760">
    <property type="entry name" value="30S/40S RIBOSOMAL PROTEIN S3"/>
    <property type="match status" value="1"/>
</dbReference>
<dbReference type="PANTHER" id="PTHR11760:SF19">
    <property type="entry name" value="SMALL RIBOSOMAL SUBUNIT PROTEIN US3C"/>
    <property type="match status" value="1"/>
</dbReference>
<dbReference type="Pfam" id="PF07650">
    <property type="entry name" value="KH_2"/>
    <property type="match status" value="1"/>
</dbReference>
<dbReference type="Pfam" id="PF00189">
    <property type="entry name" value="Ribosomal_S3_C"/>
    <property type="match status" value="1"/>
</dbReference>
<dbReference type="SMART" id="SM00322">
    <property type="entry name" value="KH"/>
    <property type="match status" value="1"/>
</dbReference>
<dbReference type="SUPFAM" id="SSF54814">
    <property type="entry name" value="Prokaryotic type KH domain (KH-domain type II)"/>
    <property type="match status" value="1"/>
</dbReference>
<dbReference type="SUPFAM" id="SSF54821">
    <property type="entry name" value="Ribosomal protein S3 C-terminal domain"/>
    <property type="match status" value="1"/>
</dbReference>
<dbReference type="PROSITE" id="PS50823">
    <property type="entry name" value="KH_TYPE_2"/>
    <property type="match status" value="1"/>
</dbReference>
<dbReference type="PROSITE" id="PS00548">
    <property type="entry name" value="RIBOSOMAL_S3"/>
    <property type="match status" value="1"/>
</dbReference>
<name>RS3_CUPNH</name>
<proteinExistence type="inferred from homology"/>
<comment type="function">
    <text evidence="1">Binds the lower part of the 30S subunit head. Binds mRNA in the 70S ribosome, positioning it for translation.</text>
</comment>
<comment type="subunit">
    <text evidence="1">Part of the 30S ribosomal subunit. Forms a tight complex with proteins S10 and S14.</text>
</comment>
<comment type="similarity">
    <text evidence="1">Belongs to the universal ribosomal protein uS3 family.</text>
</comment>
<gene>
    <name evidence="1" type="primary">rpsC</name>
    <name type="ordered locus">H16_A3478</name>
</gene>
<sequence>MGQKIHPTGFRLAVSRNWASRWYASNTKFAGMLKEDIEVRDFLKKKLKNASVGRVVIERPARNARITIYSSRPGVVIGKKGEDIELLKAELQRRMGVPVHVNIEEIRKPETDAQLIADSITQQLERRIMFRRAMKRAMQNAMRLGAQGIKIMSAGRLNGIEIARTEWYREGRVPLHTLRADIDYGFSEAETTYGIIGVKVWVYKGDHLGRNDAPVVEEPQDDRRRRPGRPEGRRREGEGRPGGNRRGGAGAGRRAAPGADAKSGE</sequence>
<evidence type="ECO:0000255" key="1">
    <source>
        <dbReference type="HAMAP-Rule" id="MF_01309"/>
    </source>
</evidence>
<evidence type="ECO:0000256" key="2">
    <source>
        <dbReference type="SAM" id="MobiDB-lite"/>
    </source>
</evidence>
<evidence type="ECO:0000305" key="3"/>
<organism>
    <name type="scientific">Cupriavidus necator (strain ATCC 17699 / DSM 428 / KCTC 22496 / NCIMB 10442 / H16 / Stanier 337)</name>
    <name type="common">Ralstonia eutropha</name>
    <dbReference type="NCBI Taxonomy" id="381666"/>
    <lineage>
        <taxon>Bacteria</taxon>
        <taxon>Pseudomonadati</taxon>
        <taxon>Pseudomonadota</taxon>
        <taxon>Betaproteobacteria</taxon>
        <taxon>Burkholderiales</taxon>
        <taxon>Burkholderiaceae</taxon>
        <taxon>Cupriavidus</taxon>
    </lineage>
</organism>
<keyword id="KW-1185">Reference proteome</keyword>
<keyword id="KW-0687">Ribonucleoprotein</keyword>
<keyword id="KW-0689">Ribosomal protein</keyword>
<keyword id="KW-0694">RNA-binding</keyword>
<keyword id="KW-0699">rRNA-binding</keyword>
<protein>
    <recommendedName>
        <fullName evidence="1">Small ribosomal subunit protein uS3</fullName>
    </recommendedName>
    <alternativeName>
        <fullName evidence="3">30S ribosomal protein S3</fullName>
    </alternativeName>
</protein>
<reference key="1">
    <citation type="journal article" date="2006" name="Nat. Biotechnol.">
        <title>Genome sequence of the bioplastic-producing 'Knallgas' bacterium Ralstonia eutropha H16.</title>
        <authorList>
            <person name="Pohlmann A."/>
            <person name="Fricke W.F."/>
            <person name="Reinecke F."/>
            <person name="Kusian B."/>
            <person name="Liesegang H."/>
            <person name="Cramm R."/>
            <person name="Eitinger T."/>
            <person name="Ewering C."/>
            <person name="Poetter M."/>
            <person name="Schwartz E."/>
            <person name="Strittmatter A."/>
            <person name="Voss I."/>
            <person name="Gottschalk G."/>
            <person name="Steinbuechel A."/>
            <person name="Friedrich B."/>
            <person name="Bowien B."/>
        </authorList>
    </citation>
    <scope>NUCLEOTIDE SEQUENCE [LARGE SCALE GENOMIC DNA]</scope>
    <source>
        <strain>ATCC 17699 / DSM 428 / KCTC 22496 / NCIMB 10442 / H16 / Stanier 337</strain>
    </source>
</reference>
<accession>Q0K625</accession>